<sequence>MSQANAATKAYSDVFFNASLEDIDPEIFGAIRNELGRQRHEIELIASENIVSRAVLEAQGSILTNKYAEGYPGKRYYGGCQYVDVVEELAIERAKKLFGAEFANVQPNSGSQMNQAVFLALLQPGDTFMGLDLNSGGHLTHGSPVNMSGKWFNVVSYGVRKDDHLLDMDEVARLARENKPKLILAGGTAYSRIWDWKRFREIADEVGAYLMVDMAHIAGLVAGGQHPSPVPHAHVCTTTTHKSLRGPRGGMILTNDADIAKKINSAVFPGLQGGPLMHVIAGKAVAFAEALKPEFKLYAKNVVDNARALAEELKSHGLDIVSGGTDNHLMLVDLRPKNATGKRAEAALGRANITCNKNGIPFDPEKPFVTSGVRLGTPAGTTRGFGVAEFKEIGSLIAEVLDGLKVANSDEGNAAVEQAVKEKVIALTGRFPMYGYQG</sequence>
<accession>Q2YN95</accession>
<organism>
    <name type="scientific">Brucella abortus (strain 2308)</name>
    <dbReference type="NCBI Taxonomy" id="359391"/>
    <lineage>
        <taxon>Bacteria</taxon>
        <taxon>Pseudomonadati</taxon>
        <taxon>Pseudomonadota</taxon>
        <taxon>Alphaproteobacteria</taxon>
        <taxon>Hyphomicrobiales</taxon>
        <taxon>Brucellaceae</taxon>
        <taxon>Brucella/Ochrobactrum group</taxon>
        <taxon>Brucella</taxon>
    </lineage>
</organism>
<dbReference type="EC" id="2.1.2.1" evidence="1"/>
<dbReference type="EMBL" id="AM040264">
    <property type="protein sequence ID" value="CAJ10743.1"/>
    <property type="molecule type" value="Genomic_DNA"/>
</dbReference>
<dbReference type="RefSeq" id="WP_002966764.1">
    <property type="nucleotide sequence ID" value="NZ_KN046823.1"/>
</dbReference>
<dbReference type="SMR" id="Q2YN95"/>
<dbReference type="STRING" id="359391.BAB1_0787"/>
<dbReference type="GeneID" id="93016845"/>
<dbReference type="KEGG" id="bmf:BAB1_0787"/>
<dbReference type="PATRIC" id="fig|359391.11.peg.3098"/>
<dbReference type="HOGENOM" id="CLU_022477_2_1_5"/>
<dbReference type="PhylomeDB" id="Q2YN95"/>
<dbReference type="UniPathway" id="UPA00193"/>
<dbReference type="UniPathway" id="UPA00288">
    <property type="reaction ID" value="UER01023"/>
</dbReference>
<dbReference type="PRO" id="PR:Q2YN95"/>
<dbReference type="Proteomes" id="UP000002719">
    <property type="component" value="Chromosome I"/>
</dbReference>
<dbReference type="GO" id="GO:0005829">
    <property type="term" value="C:cytosol"/>
    <property type="evidence" value="ECO:0007669"/>
    <property type="project" value="TreeGrafter"/>
</dbReference>
<dbReference type="GO" id="GO:0004372">
    <property type="term" value="F:glycine hydroxymethyltransferase activity"/>
    <property type="evidence" value="ECO:0007669"/>
    <property type="project" value="UniProtKB-UniRule"/>
</dbReference>
<dbReference type="GO" id="GO:0030170">
    <property type="term" value="F:pyridoxal phosphate binding"/>
    <property type="evidence" value="ECO:0007669"/>
    <property type="project" value="UniProtKB-UniRule"/>
</dbReference>
<dbReference type="GO" id="GO:0019264">
    <property type="term" value="P:glycine biosynthetic process from serine"/>
    <property type="evidence" value="ECO:0007669"/>
    <property type="project" value="UniProtKB-UniRule"/>
</dbReference>
<dbReference type="GO" id="GO:0035999">
    <property type="term" value="P:tetrahydrofolate interconversion"/>
    <property type="evidence" value="ECO:0007669"/>
    <property type="project" value="UniProtKB-UniRule"/>
</dbReference>
<dbReference type="CDD" id="cd00378">
    <property type="entry name" value="SHMT"/>
    <property type="match status" value="1"/>
</dbReference>
<dbReference type="FunFam" id="3.40.640.10:FF:000001">
    <property type="entry name" value="Serine hydroxymethyltransferase"/>
    <property type="match status" value="1"/>
</dbReference>
<dbReference type="FunFam" id="3.90.1150.10:FF:000003">
    <property type="entry name" value="Serine hydroxymethyltransferase"/>
    <property type="match status" value="1"/>
</dbReference>
<dbReference type="Gene3D" id="3.90.1150.10">
    <property type="entry name" value="Aspartate Aminotransferase, domain 1"/>
    <property type="match status" value="1"/>
</dbReference>
<dbReference type="Gene3D" id="3.40.640.10">
    <property type="entry name" value="Type I PLP-dependent aspartate aminotransferase-like (Major domain)"/>
    <property type="match status" value="1"/>
</dbReference>
<dbReference type="HAMAP" id="MF_00051">
    <property type="entry name" value="SHMT"/>
    <property type="match status" value="1"/>
</dbReference>
<dbReference type="InterPro" id="IPR015424">
    <property type="entry name" value="PyrdxlP-dep_Trfase"/>
</dbReference>
<dbReference type="InterPro" id="IPR015421">
    <property type="entry name" value="PyrdxlP-dep_Trfase_major"/>
</dbReference>
<dbReference type="InterPro" id="IPR015422">
    <property type="entry name" value="PyrdxlP-dep_Trfase_small"/>
</dbReference>
<dbReference type="InterPro" id="IPR001085">
    <property type="entry name" value="Ser_HO-MeTrfase"/>
</dbReference>
<dbReference type="InterPro" id="IPR049943">
    <property type="entry name" value="Ser_HO-MeTrfase-like"/>
</dbReference>
<dbReference type="InterPro" id="IPR019798">
    <property type="entry name" value="Ser_HO-MeTrfase_PLP_BS"/>
</dbReference>
<dbReference type="InterPro" id="IPR039429">
    <property type="entry name" value="SHMT-like_dom"/>
</dbReference>
<dbReference type="NCBIfam" id="NF000586">
    <property type="entry name" value="PRK00011.1"/>
    <property type="match status" value="1"/>
</dbReference>
<dbReference type="PANTHER" id="PTHR11680">
    <property type="entry name" value="SERINE HYDROXYMETHYLTRANSFERASE"/>
    <property type="match status" value="1"/>
</dbReference>
<dbReference type="PANTHER" id="PTHR11680:SF35">
    <property type="entry name" value="SERINE HYDROXYMETHYLTRANSFERASE 1"/>
    <property type="match status" value="1"/>
</dbReference>
<dbReference type="Pfam" id="PF00464">
    <property type="entry name" value="SHMT"/>
    <property type="match status" value="1"/>
</dbReference>
<dbReference type="PIRSF" id="PIRSF000412">
    <property type="entry name" value="SHMT"/>
    <property type="match status" value="1"/>
</dbReference>
<dbReference type="SUPFAM" id="SSF53383">
    <property type="entry name" value="PLP-dependent transferases"/>
    <property type="match status" value="1"/>
</dbReference>
<dbReference type="PROSITE" id="PS00096">
    <property type="entry name" value="SHMT"/>
    <property type="match status" value="1"/>
</dbReference>
<evidence type="ECO:0000255" key="1">
    <source>
        <dbReference type="HAMAP-Rule" id="MF_00051"/>
    </source>
</evidence>
<protein>
    <recommendedName>
        <fullName evidence="1">Serine hydroxymethyltransferase</fullName>
        <shortName evidence="1">SHMT</shortName>
        <shortName evidence="1">Serine methylase</shortName>
        <ecNumber evidence="1">2.1.2.1</ecNumber>
    </recommendedName>
</protein>
<proteinExistence type="inferred from homology"/>
<keyword id="KW-0028">Amino-acid biosynthesis</keyword>
<keyword id="KW-0963">Cytoplasm</keyword>
<keyword id="KW-0554">One-carbon metabolism</keyword>
<keyword id="KW-0663">Pyridoxal phosphate</keyword>
<keyword id="KW-1185">Reference proteome</keyword>
<keyword id="KW-0808">Transferase</keyword>
<comment type="function">
    <text evidence="1">Catalyzes the reversible interconversion of serine and glycine with tetrahydrofolate (THF) serving as the one-carbon carrier. This reaction serves as the major source of one-carbon groups required for the biosynthesis of purines, thymidylate, methionine, and other important biomolecules. Also exhibits THF-independent aldolase activity toward beta-hydroxyamino acids, producing glycine and aldehydes, via a retro-aldol mechanism.</text>
</comment>
<comment type="catalytic activity">
    <reaction evidence="1">
        <text>(6R)-5,10-methylene-5,6,7,8-tetrahydrofolate + glycine + H2O = (6S)-5,6,7,8-tetrahydrofolate + L-serine</text>
        <dbReference type="Rhea" id="RHEA:15481"/>
        <dbReference type="ChEBI" id="CHEBI:15377"/>
        <dbReference type="ChEBI" id="CHEBI:15636"/>
        <dbReference type="ChEBI" id="CHEBI:33384"/>
        <dbReference type="ChEBI" id="CHEBI:57305"/>
        <dbReference type="ChEBI" id="CHEBI:57453"/>
        <dbReference type="EC" id="2.1.2.1"/>
    </reaction>
</comment>
<comment type="cofactor">
    <cofactor evidence="1">
        <name>pyridoxal 5'-phosphate</name>
        <dbReference type="ChEBI" id="CHEBI:597326"/>
    </cofactor>
</comment>
<comment type="pathway">
    <text evidence="1">One-carbon metabolism; tetrahydrofolate interconversion.</text>
</comment>
<comment type="pathway">
    <text evidence="1">Amino-acid biosynthesis; glycine biosynthesis; glycine from L-serine: step 1/1.</text>
</comment>
<comment type="subunit">
    <text evidence="1">Homodimer.</text>
</comment>
<comment type="subcellular location">
    <subcellularLocation>
        <location evidence="1">Cytoplasm</location>
    </subcellularLocation>
</comment>
<comment type="similarity">
    <text evidence="1">Belongs to the SHMT family.</text>
</comment>
<gene>
    <name evidence="1" type="primary">glyA</name>
    <name type="ordered locus">BAB1_0787</name>
</gene>
<reference key="1">
    <citation type="journal article" date="2005" name="Infect. Immun.">
        <title>Whole-genome analyses of speciation events in pathogenic Brucellae.</title>
        <authorList>
            <person name="Chain P.S."/>
            <person name="Comerci D.J."/>
            <person name="Tolmasky M.E."/>
            <person name="Larimer F.W."/>
            <person name="Malfatti S.A."/>
            <person name="Vergez L.M."/>
            <person name="Aguero F."/>
            <person name="Land M.L."/>
            <person name="Ugalde R.A."/>
            <person name="Garcia E."/>
        </authorList>
    </citation>
    <scope>NUCLEOTIDE SEQUENCE [LARGE SCALE GENOMIC DNA]</scope>
    <source>
        <strain>2308</strain>
    </source>
</reference>
<name>GLYA_BRUA2</name>
<feature type="chain" id="PRO_0000234954" description="Serine hydroxymethyltransferase">
    <location>
        <begin position="1"/>
        <end position="438"/>
    </location>
</feature>
<feature type="binding site" evidence="1">
    <location>
        <position position="133"/>
    </location>
    <ligand>
        <name>(6S)-5,6,7,8-tetrahydrofolate</name>
        <dbReference type="ChEBI" id="CHEBI:57453"/>
    </ligand>
</feature>
<feature type="binding site" evidence="1">
    <location>
        <begin position="137"/>
        <end position="139"/>
    </location>
    <ligand>
        <name>(6S)-5,6,7,8-tetrahydrofolate</name>
        <dbReference type="ChEBI" id="CHEBI:57453"/>
    </ligand>
</feature>
<feature type="site" description="Plays an important role in substrate specificity" evidence="1">
    <location>
        <position position="241"/>
    </location>
</feature>
<feature type="modified residue" description="N6-(pyridoxal phosphate)lysine" evidence="1">
    <location>
        <position position="242"/>
    </location>
</feature>